<reference key="1">
    <citation type="journal article" date="2000" name="J. Virol.">
        <title>The nucleotide sequence of koala (Phascolarctos cinereus) retrovirus: a novel type C endogenous virus related to Gibbon ape leukemia virus.</title>
        <authorList>
            <person name="Hanger J.J."/>
            <person name="Bromham L.D."/>
            <person name="McKee J.J."/>
            <person name="O'Brien T.M."/>
            <person name="Robinson W.F."/>
        </authorList>
    </citation>
    <scope>NUCLEOTIDE SEQUENCE [GENOMIC DNA]</scope>
</reference>
<reference evidence="15 16" key="2">
    <citation type="journal article" date="2013" name="J. Virol.">
        <title>Construction and characterization of an infectious molecular clone of koala retrovirus.</title>
        <authorList>
            <person name="Shojima T."/>
            <person name="Hoshino S."/>
            <person name="Abe M."/>
            <person name="Yasuda J."/>
            <person name="Shogen H."/>
            <person name="Kobayashi T."/>
            <person name="Miyazawa T."/>
        </authorList>
    </citation>
    <scope>NUCLEOTIDE SEQUENCE [LARGE SCALE GENOMIC DNA]</scope>
</reference>
<sequence>MGQGESTPLSLTLDHWKDVKTRAHNLSVEIRKGKWQTFCSSEWPTFEVGWPPEGTFNPSIISAVKRIVFQETGGHPDQVPYIIVWQDLSNSPPPWVPPLAKIAVASGQDNGRKSAGGRPSAPSRLPIYPETDSLFLLSEPPPYPTSPPPPPAPHAARPAPGLMAEGLGSEGPAAGTRSRRPRSPTGDTGPDSTVALPLRAVGPPAEPNGLVPLQYWPFSSADLYNWKSNHPSFSENPTGLTGLLESLMFSHQPTWDDCQQLLQVLFTTEERERILLEARKNVLGVNGAPTQLENLINEAFPLNRPQWDHNTAEGRERLLVYRRTLVAGLKGAARRPTNLAKVREVLQGPTEPPSVFLERLMEAYRRYTPFDPSSEGQKAAVAMSFIGQSAPDIKKKLQRLEGLQDHSLQDLIKEAEKVYHKRETEEEKQEREKKETEERERRRDRRQEKNLTKILAAVVSEKGFRGRQAGNLSNRAMRAPREGRPPLDKDQCAYCKERGHWARECPRKKNARETNVLTLGDQGSRGSDPLPEPRVTLTVEGIPTEFLVDTGAEHSVLTKPMGKMGSKRTVVAGATGSKVYPWTTKRLLKIGQKQVTHSFLVIPECPAPLLGRDLLTKLKAQIQFSTEGPQVTWEDRPAMCLVLNLEEEYRLHEKPVPPSIDPSWLQLFPMVWAEKAGMGLANQVPPVVVELKSDASPVAVRQYPMSKEAREGIRPHIQRFLDLGILVPCQSPWNTPLLPVKKPGTNDYRPVQDLREVNKRVQDIHPTVPNPYNLLSSLPPSHTWYSVLDLKDAFFCLKLHPNSQPLFAFEWRDPEKGNTGQLTWTRLPQGFKNSPTLFDEALHRDLASFRALNPQVVMLQYVDDLLVAAPTYRDCKEGTRRLLQELSKLGYRVSAKKAQLCREEVTYLGYLLKGGKRWLTPARKATVMKIPTPTTPRQVREFLGTAGFCRLWIPGFASLAAPLYPLTREKVPFTWTEAHQEAFGRIKEALLSAPALALPDLTKPFALYVDEKEGVARGVLTQTLGPWRRPVAYLSKKLDPVASGWPTCLKAIAAVALLLKDADKLTLGQNVLVIAPHNLESIVRQPPDRWMTNARMTHYQSLLLNERVSFAPPAILNPATLLPVESDDTPIHICSEILAEETGTRPDLRDQPLPGVPAWYTDGSSFIMDGRRQAGAAIVDNKRTVWASNLPEGTSAQKAELIALTQALRLAEGKSINIYTDSRYAFATAHVHGAIYKQRGLLTSAGKDIKNKEEILALLEAIHLPKRVAIIHCPGHQRGTDPVATGNRKADEAAKQAAQSTRILTETTKNQEHFEPTRGKIKPRELTPDQGREFIQRLHQLTHLGPDKLLQLVGRTSFHIPNLQSVVREITSKCQVCAVTNAVTTYREPGRRQRGDRPGVYWEVDFTEVKPGRYGNRYLLVFIDTFSGWVEAFPTKTETALTVCKKILEEILPRFGIPKVLGSDNGPAFVAQVSQGLATQLGIDWKLHCAYRPQSSGQVERMNRTIKETLTKLALETGGKDWVTLLPLALLRARNTPGQFGLTPYEILHGGPPPVLASGEVVGSNGDFFPVLFTHLKALEVVRTQIWDQIKEAYRPGTVAIPHPFQVGDRVLVRRHRSGSLEPRWKGPYLVLLTTPTAVKVDGIAAWVHASHLKPAPPGAPDESWELEKTDHPLKLRVRRRRNESTA</sequence>
<accession>Q9TTC1</accession>
<accession>K7ZK66</accession>
<evidence type="ECO:0000250" key="1"/>
<evidence type="ECO:0000250" key="2">
    <source>
        <dbReference type="UniProtKB" id="P03332"/>
    </source>
</evidence>
<evidence type="ECO:0000250" key="3">
    <source>
        <dbReference type="UniProtKB" id="P03336"/>
    </source>
</evidence>
<evidence type="ECO:0000250" key="4">
    <source>
        <dbReference type="UniProtKB" id="P03355"/>
    </source>
</evidence>
<evidence type="ECO:0000250" key="5">
    <source>
        <dbReference type="UniProtKB" id="P26807"/>
    </source>
</evidence>
<evidence type="ECO:0000255" key="6"/>
<evidence type="ECO:0000255" key="7">
    <source>
        <dbReference type="PROSITE-ProRule" id="PRU00047"/>
    </source>
</evidence>
<evidence type="ECO:0000255" key="8">
    <source>
        <dbReference type="PROSITE-ProRule" id="PRU00275"/>
    </source>
</evidence>
<evidence type="ECO:0000255" key="9">
    <source>
        <dbReference type="PROSITE-ProRule" id="PRU00405"/>
    </source>
</evidence>
<evidence type="ECO:0000255" key="10">
    <source>
        <dbReference type="PROSITE-ProRule" id="PRU00408"/>
    </source>
</evidence>
<evidence type="ECO:0000255" key="11">
    <source>
        <dbReference type="PROSITE-ProRule" id="PRU00457"/>
    </source>
</evidence>
<evidence type="ECO:0000256" key="12">
    <source>
        <dbReference type="SAM" id="MobiDB-lite"/>
    </source>
</evidence>
<evidence type="ECO:0000269" key="13">
    <source>
    </source>
</evidence>
<evidence type="ECO:0000305" key="14"/>
<evidence type="ECO:0000312" key="15">
    <source>
        <dbReference type="EMBL" id="BAM67146.1"/>
    </source>
</evidence>
<evidence type="ECO:0000312" key="16">
    <source>
        <dbReference type="Proteomes" id="UP000101411"/>
    </source>
</evidence>
<feature type="initiator methionine" description="Removed" evidence="6">
    <location>
        <position position="1"/>
    </location>
</feature>
<feature type="chain" id="PRO_0000249431" description="Gag-Pol polyprotein">
    <location>
        <begin position="2"/>
        <end position="1687"/>
    </location>
</feature>
<feature type="chain" id="PRO_0000442856" description="Matrix protein p15">
    <location>
        <begin position="2"/>
        <end position="128"/>
    </location>
</feature>
<feature type="chain" id="PRO_0000442857" description="RNA-binding phosphoprotein p12">
    <location>
        <begin position="129"/>
        <end position="196"/>
    </location>
</feature>
<feature type="chain" id="PRO_0000442858" description="Capsid protein p30">
    <location>
        <begin position="197"/>
        <end position="455"/>
    </location>
</feature>
<feature type="chain" id="PRO_0000442859" description="Nucleocapsid protein p10-Pol">
    <location>
        <begin position="456"/>
        <end position="517"/>
    </location>
</feature>
<feature type="chain" id="PRO_0000249432" description="Protease/Reverse transcriptase/ribonuclease H" evidence="4">
    <location>
        <begin position="518" status="uncertain"/>
        <end position="1310"/>
    </location>
</feature>
<feature type="chain" id="PRO_0000249433" description="Integrase">
    <location>
        <begin position="1311"/>
        <end position="1687"/>
    </location>
</feature>
<feature type="domain" description="Peptidase A2" evidence="8">
    <location>
        <begin position="544"/>
        <end position="614"/>
    </location>
</feature>
<feature type="domain" description="Reverse transcriptase" evidence="9">
    <location>
        <begin position="721"/>
        <end position="912"/>
    </location>
</feature>
<feature type="domain" description="RNase H type-1" evidence="10">
    <location>
        <begin position="1153"/>
        <end position="1299"/>
    </location>
</feature>
<feature type="domain" description="Integrase catalytic" evidence="11">
    <location>
        <begin position="1394"/>
        <end position="1552"/>
    </location>
</feature>
<feature type="zinc finger region" description="CCHC-type" evidence="7">
    <location>
        <begin position="490"/>
        <end position="507"/>
    </location>
</feature>
<feature type="zinc finger region" description="HHCC-type" evidence="4">
    <location>
        <begin position="1339"/>
        <end position="1377"/>
    </location>
</feature>
<feature type="region of interest" description="Disordered" evidence="12">
    <location>
        <begin position="107"/>
        <end position="126"/>
    </location>
</feature>
<feature type="region of interest" description="Disordered" evidence="12">
    <location>
        <begin position="136"/>
        <end position="195"/>
    </location>
</feature>
<feature type="region of interest" description="Disordered" evidence="12">
    <location>
        <begin position="420"/>
        <end position="447"/>
    </location>
</feature>
<feature type="region of interest" description="Disordered" evidence="12">
    <location>
        <begin position="466"/>
        <end position="485"/>
    </location>
</feature>
<feature type="coiled-coil region" evidence="6">
    <location>
        <begin position="408"/>
        <end position="453"/>
    </location>
</feature>
<feature type="short sequence motif" description="PTAP/PSAP motif" evidence="2">
    <location>
        <begin position="108"/>
        <end position="111"/>
    </location>
</feature>
<feature type="short sequence motif" description="PPXY motif" evidence="2">
    <location>
        <begin position="140"/>
        <end position="143"/>
    </location>
</feature>
<feature type="compositionally biased region" description="Pro residues" evidence="12">
    <location>
        <begin position="139"/>
        <end position="153"/>
    </location>
</feature>
<feature type="active site" description="Protease; shared with dimeric partner" evidence="8">
    <location>
        <position position="549"/>
    </location>
</feature>
<feature type="binding site" evidence="9">
    <location>
        <position position="789"/>
    </location>
    <ligand>
        <name>Mg(2+)</name>
        <dbReference type="ChEBI" id="CHEBI:18420"/>
        <label>1</label>
        <note>catalytic; for reverse transcriptase activity</note>
    </ligand>
</feature>
<feature type="binding site" evidence="9">
    <location>
        <position position="863"/>
    </location>
    <ligand>
        <name>Mg(2+)</name>
        <dbReference type="ChEBI" id="CHEBI:18420"/>
        <label>1</label>
        <note>catalytic; for reverse transcriptase activity</note>
    </ligand>
</feature>
<feature type="binding site" evidence="9">
    <location>
        <position position="864"/>
    </location>
    <ligand>
        <name>Mg(2+)</name>
        <dbReference type="ChEBI" id="CHEBI:18420"/>
        <label>1</label>
        <note>catalytic; for reverse transcriptase activity</note>
    </ligand>
</feature>
<feature type="binding site" evidence="10">
    <location>
        <position position="1162"/>
    </location>
    <ligand>
        <name>Mg(2+)</name>
        <dbReference type="ChEBI" id="CHEBI:18420"/>
        <label>2</label>
        <note>catalytic; for RNase H activity</note>
    </ligand>
</feature>
<feature type="binding site" evidence="10">
    <location>
        <position position="1200"/>
    </location>
    <ligand>
        <name>Mg(2+)</name>
        <dbReference type="ChEBI" id="CHEBI:18420"/>
        <label>2</label>
        <note>catalytic; for RNase H activity</note>
    </ligand>
</feature>
<feature type="binding site" evidence="10">
    <location>
        <position position="1221"/>
    </location>
    <ligand>
        <name>Mg(2+)</name>
        <dbReference type="ChEBI" id="CHEBI:18420"/>
        <label>2</label>
        <note>catalytic; for RNase H activity</note>
    </ligand>
</feature>
<feature type="binding site" evidence="10">
    <location>
        <position position="1291"/>
    </location>
    <ligand>
        <name>Mg(2+)</name>
        <dbReference type="ChEBI" id="CHEBI:18420"/>
        <label>2</label>
        <note>catalytic; for RNase H activity</note>
    </ligand>
</feature>
<feature type="binding site" evidence="11">
    <location>
        <position position="1405"/>
    </location>
    <ligand>
        <name>Mg(2+)</name>
        <dbReference type="ChEBI" id="CHEBI:18420"/>
        <label>3</label>
        <note>catalytic; for integrase activity</note>
    </ligand>
</feature>
<feature type="binding site" evidence="11">
    <location>
        <position position="1464"/>
    </location>
    <ligand>
        <name>Mg(2+)</name>
        <dbReference type="ChEBI" id="CHEBI:18420"/>
        <label>3</label>
        <note>catalytic; for integrase activity</note>
    </ligand>
</feature>
<feature type="site" description="Cleavage; by viral protease" evidence="4">
    <location>
        <begin position="128"/>
        <end position="129"/>
    </location>
</feature>
<feature type="site" description="Cleavage; by viral protease" evidence="4">
    <location>
        <begin position="196"/>
        <end position="197"/>
    </location>
</feature>
<feature type="site" description="Cleavage; by viral protease" evidence="4">
    <location>
        <begin position="455"/>
        <end position="456"/>
    </location>
</feature>
<feature type="site" description="Cleavage; by viral protease" evidence="4">
    <location>
        <begin position="517"/>
        <end position="518"/>
    </location>
</feature>
<feature type="site" description="Cleavage; by viral protease" evidence="4">
    <location>
        <begin position="1310"/>
        <end position="1311"/>
    </location>
</feature>
<feature type="lipid moiety-binding region" description="N-myristoyl glycine; by host" evidence="6">
    <location>
        <position position="2"/>
    </location>
</feature>
<feature type="sequence variant" evidence="13">
    <original>E</original>
    <variation>K</variation>
    <location>
        <position position="47"/>
    </location>
</feature>
<feature type="sequence variant" evidence="13">
    <original>F</original>
    <variation>S</variation>
    <location>
        <position position="464"/>
    </location>
</feature>
<feature type="sequence variant" evidence="13">
    <original>S</original>
    <variation>P</variation>
    <location>
        <position position="566"/>
    </location>
</feature>
<feature type="sequence variant" evidence="13">
    <original>A</original>
    <variation>T</variation>
    <location>
        <position position="1382"/>
    </location>
</feature>
<feature type="sequence variant" evidence="13">
    <original>P</original>
    <variation>S</variation>
    <location>
        <position position="1389"/>
    </location>
</feature>
<feature type="sequence variant" evidence="13">
    <original>D</original>
    <variation>N</variation>
    <location>
        <position position="1484"/>
    </location>
</feature>
<proteinExistence type="inferred from homology"/>
<organismHost>
    <name type="scientific">Phascolarctos cinereus</name>
    <name type="common">Koala</name>
    <dbReference type="NCBI Taxonomy" id="38626"/>
</organismHost>
<comment type="function">
    <molecule>Gag-Pol polyprotein</molecule>
    <text evidence="2">Plays a role in budding and is processed by the viral protease during virion maturation outside the cell. During budding, it recruits, in a PPXY-dependent or independent manner, Nedd4-like ubiquitin ligases that conjugate ubiquitin molecules to Gag-Pol, or to Gag-Pol binding host factors. Interaction with HECT ubiquitin ligases probably links the viral protein to the host ESCRT pathway and facilitates release.</text>
</comment>
<comment type="function">
    <molecule>Matrix protein p15</molecule>
    <text evidence="2">Targets Gag and gag-pol polyproteins to the plasma membrane via a multipartite membrane binding signal, that includes its myristoylated N-terminus. Also mediates nuclear localization of the pre-integration complex.</text>
</comment>
<comment type="function">
    <molecule>RNA-binding phosphoprotein p12</molecule>
    <text evidence="4">Constituent of the pre-integration complex (PIC) which tethers the latter to mitotic chromosomes. This allows the integration of the viral genome into the host DNA.</text>
</comment>
<comment type="function">
    <molecule>Capsid protein p30</molecule>
    <text evidence="3">Forms the spherical core of the virion that encapsulates the genomic RNA-nucleocapsid complex.</text>
</comment>
<comment type="function">
    <molecule>Nucleocapsid protein p10-Pol</molecule>
    <text evidence="2 4">Involved in the packaging and encapsidation of two copies of the genome (By similarity). Binds with high affinity to conserved UCUG elements within the packaging signal, located near the 5'-end of the genome (By similarity). This binding is dependent on genome dimerization (By similarity). Acts as a nucleic acid chaperone which is involved in rearrangement of nucleic acid secondary structures during gRNA retrotranscription (By similarity).</text>
</comment>
<comment type="function">
    <text evidence="8">Protease: The aspartyl protease mediates proteolytic cleavages of Gag and Gag-Pol polyproteins during or shortly after the release of the virion from the plasma membrane. Cleavages take place as an ordered, step-wise cascade to yield mature proteins. This process is called maturation. Displays maximal activity during the budding process just prior to particle release from the cell.</text>
</comment>
<comment type="function">
    <text evidence="6">Reverse transcriptase/ribonuclease H: RT is a multifunctional enzyme that converts the viral dimeric RNA genome into dsDNA in the cytoplasm, shortly after virus entry into the cell. This enzyme displays a DNA polymerase activity that can copy either DNA or RNA templates, and a ribonuclease H (RNase H) activity that cleaves the RNA strand of RNA-DNA heteroduplexes in a partially processive 3' to 5' endonucleasic mode. Conversion of viral genomic RNA into dsDNA requires many steps. A tRNA binds to the primer-binding site (PBS) situated at the 5' end of the viral RNA. RT uses the 3' end of the tRNA primer to perform a short round of RNA-dependent minus-strand DNA synthesis. The reading proceeds through the U5 region and ends after the repeated (R) region which is present at both ends of viral RNA. The portion of the RNA-DNA heteroduplex is digested by the RNase H, resulting in a ssDNA product attached to the tRNA primer. This ssDNA/tRNA hybridizes with the identical R region situated at the 3' end of viral RNA. This template exchange, known as minus-strand DNA strong stop transfer, can be either intra- or intermolecular. RT uses the 3' end of this newly synthesized short ssDNA to perform the RNA-dependent minus-strand DNA synthesis of the whole template. RNase H digests the RNA template except for a polypurine tract (PPT) situated at the 5' end of the genome. It is not clear if both polymerase and RNase H activities are simultaneous. RNase H probably can proceed both in a polymerase-dependent (RNA cut into small fragments by the same RT performing DNA synthesis) and a polymerase-independent mode (cleavage of remaining RNA fragments by free RTs). Secondly, RT performs DNA-directed plus-strand DNA synthesis using the PPT that has not been removed by RNase H as primers. PPT and tRNA primers are then removed by RNase H. The 3' and 5' ssDNA PBS regions hybridize to form a circular dsDNA intermediate. Strand displacement synthesis by RT to the PBS and PPT ends produces a blunt ended, linear dsDNA copy of the viral genome that includes long terminal repeats (LTRs) at both ends.</text>
</comment>
<comment type="function">
    <molecule>Integrase</molecule>
    <text evidence="4">Catalyzes viral DNA integration into the host chromosome, by performing a series of DNA cutting and joining reactions. This enzyme activity takes place after virion entry into a cell and reverse transcription of the RNA genome in dsDNA. The first step in the integration process is 3' processing. This step requires a complex comprising the viral genome, matrix protein and integrase. This complex is called the pre-integration complex (PIC). The integrase protein removes 2 nucleotides from each 3' end of the viral DNA, leaving recessed CA OH's at the 3' ends. In the second step that requires cell division, the PIC enters cell nucleus. In the third step, termed strand transfer, the integrase protein joins the previously processed 3' ends to the 5' ends of strands of target cellular DNA at the site of integration. The last step is viral DNA integration into host chromosome.</text>
</comment>
<comment type="catalytic activity">
    <reaction evidence="9">
        <text>DNA(n) + a 2'-deoxyribonucleoside 5'-triphosphate = DNA(n+1) + diphosphate</text>
        <dbReference type="Rhea" id="RHEA:22508"/>
        <dbReference type="Rhea" id="RHEA-COMP:17339"/>
        <dbReference type="Rhea" id="RHEA-COMP:17340"/>
        <dbReference type="ChEBI" id="CHEBI:33019"/>
        <dbReference type="ChEBI" id="CHEBI:61560"/>
        <dbReference type="ChEBI" id="CHEBI:173112"/>
        <dbReference type="EC" id="2.7.7.49"/>
    </reaction>
</comment>
<comment type="catalytic activity">
    <reaction evidence="9">
        <text>DNA(n) + a 2'-deoxyribonucleoside 5'-triphosphate = DNA(n+1) + diphosphate</text>
        <dbReference type="Rhea" id="RHEA:22508"/>
        <dbReference type="Rhea" id="RHEA-COMP:17339"/>
        <dbReference type="Rhea" id="RHEA-COMP:17340"/>
        <dbReference type="ChEBI" id="CHEBI:33019"/>
        <dbReference type="ChEBI" id="CHEBI:61560"/>
        <dbReference type="ChEBI" id="CHEBI:173112"/>
        <dbReference type="EC" id="2.7.7.7"/>
    </reaction>
</comment>
<comment type="catalytic activity">
    <reaction evidence="10">
        <text>Endonucleolytic cleavage to 5'-phosphomonoester.</text>
        <dbReference type="EC" id="3.1.26.4"/>
    </reaction>
</comment>
<comment type="cofactor">
    <cofactor evidence="9">
        <name>Mg(2+)</name>
        <dbReference type="ChEBI" id="CHEBI:18420"/>
    </cofactor>
    <text evidence="9">The RT polymerase active site binds 2 magnesium ions.</text>
</comment>
<comment type="cofactor">
    <cofactor evidence="4">
        <name>Mg(2+)</name>
        <dbReference type="ChEBI" id="CHEBI:18420"/>
    </cofactor>
    <text evidence="4">Binds 1 magnesium ion for ribonuclease H (RNase H) activity.</text>
</comment>
<comment type="cofactor">
    <cofactor evidence="4">
        <name>Mg(2+)</name>
        <dbReference type="ChEBI" id="CHEBI:18420"/>
    </cofactor>
    <text evidence="4">Magnesium ions are required for integrase activity. Binds at least 1, maybe 2 magnesium ions.</text>
</comment>
<comment type="activity regulation">
    <text evidence="4">Protease: Most efficiently inhibited by Amprenavir, which is able to block Gag-Pol processing in infected cells.</text>
</comment>
<comment type="subunit">
    <molecule>Capsid protein p30</molecule>
    <text evidence="4">Homohexamer; further associates as homomultimer (By similarity). The virus core is composed of a lattice formed from hexagonal rings, each containing six capsid monomers (By similarity).</text>
</comment>
<comment type="subunit">
    <molecule>Gag-Pol polyprotein</molecule>
    <text evidence="4">Interacts (via PPXY motif) with host NEDD4 (By similarity). Interacts (via PSAP motif) with host TSG101 (By similarity).</text>
</comment>
<comment type="subunit">
    <molecule>Protease/Reverse transcriptase/ribonuclease H</molecule>
    <text evidence="4">The reverse transcriptase is a monomer (Potential). Interacts (via RNase domains) with host release factor ETF1; this interaction is essential for translational readthrough of amber codon between viral gag and pol genes, as well as for viral replication.</text>
</comment>
<comment type="subunit">
    <molecule>Integrase</molecule>
    <text evidence="4">Homodimer (By similarity).</text>
</comment>
<comment type="subcellular location">
    <molecule>Gag-Pol polyprotein</molecule>
    <subcellularLocation>
        <location evidence="2">Virion</location>
    </subcellularLocation>
    <subcellularLocation>
        <location evidence="2">Host cell membrane</location>
        <topology evidence="2">Lipid-anchor</topology>
    </subcellularLocation>
    <subcellularLocation>
        <location evidence="2">Host late endosome membrane</location>
        <topology evidence="2">Lipid-anchor</topology>
    </subcellularLocation>
    <subcellularLocation>
        <location evidence="5">Host endosome</location>
        <location evidence="5">Host multivesicular body</location>
    </subcellularLocation>
    <text evidence="4">These locations are probably linked to virus assembly sites.</text>
</comment>
<comment type="subcellular location">
    <molecule>Matrix protein p15</molecule>
    <subcellularLocation>
        <location evidence="4">Virion</location>
    </subcellularLocation>
</comment>
<comment type="subcellular location">
    <molecule>Capsid protein p30</molecule>
    <subcellularLocation>
        <location evidence="4">Virion</location>
    </subcellularLocation>
</comment>
<comment type="subcellular location">
    <molecule>Nucleocapsid protein p10-Pol</molecule>
    <subcellularLocation>
        <location evidence="4">Virion</location>
    </subcellularLocation>
</comment>
<comment type="subcellular location">
    <molecule>RNA-binding phosphoprotein p12</molecule>
    <subcellularLocation>
        <location evidence="4">Host cytoplasm</location>
    </subcellularLocation>
    <text evidence="4">Localizes to the host cytoplasm early in infection and binds to the mitotic chromosomes later on.</text>
</comment>
<comment type="domain">
    <text evidence="2">Gag polyprotein: Late-budding domains (L domains) are short sequence motifs essential for viral particle budding. They recruit proteins of the host ESCRT machinery (Endosomal Sorting Complex Required for Transport) or ESCRT-associated proteins. RNA-binding phosphoprotein p12 contains one L domain: a PPXY motif which potentially interacts with the WW domain 3 of NEDD4 E3 ubiquitin ligase. Matrix protein p15 contains one L domain: a PTAP/PSAP motif, which potentially interacts with the UEV domain of TSG101.</text>
</comment>
<comment type="domain">
    <text evidence="1">The reverse transcriptase/ribonuclease H (RT) is structured in five subdomains: finger, palm, thumb, connection and RNase H. Within the palm subdomain, the 'primer grip' region is thought to be involved in the positioning of the primer terminus for accommodating the incoming nucleotide. The RNase H domain stabilizes the association of RT with primer-template (By similarity).</text>
</comment>
<comment type="domain">
    <text evidence="1">Integrase core domain contains the D-x(n)-D-x(35)-E motif, named for the phylogenetically conserved glutamic acid and aspartic acid residues and the invariant 35 amino acid spacing between the second and third acidic residues. Each acidic residue of the D,D(35)E motif is independently essential for the 3'-processing and strand transfer activities of purified integrase protein (By similarity).</text>
</comment>
<comment type="PTM">
    <molecule>Gag-Pol polyprotein</molecule>
    <text evidence="4">Specific enzymatic cleavages by the viral protease yield mature proteins. The protease is released by autocatalytic cleavage. The polyprotein is cleaved during and after budding, this process is termed maturation.</text>
</comment>
<comment type="PTM">
    <molecule>RNA-binding phosphoprotein p12</molecule>
    <text evidence="4">Phosphorylated on serine residues.</text>
</comment>
<comment type="miscellaneous">
    <molecule>Gag-Pol polyprotein</molecule>
    <text evidence="4">This protein is translated as a gag-pol fusion protein by episodic readthrough of the gag protein termination codon. Readthrough of the terminator codon TAG occurs between the codons for 521-Asp and 523-Gly.</text>
</comment>
<comment type="miscellaneous">
    <molecule>Nucleocapsid protein p10-Pol</molecule>
    <text evidence="4">Nucleocapsid protein p10-Pol released from Pol polyprotein (NC-pol) is a few amino acids shorter than the nucleocapsid protein p10 released from Gag polyprotein (NC-gag).</text>
</comment>
<comment type="miscellaneous">
    <text evidence="9">Reverse transcriptase/ribonuclease H: The reverse transcriptase is an error-prone enzyme that lacks a proof-reading function. High mutations rate is a direct consequence of this characteristic. RT also displays frequent template switching leading to high recombination rate. Recombination mostly occurs between homologous regions of the two copackaged RNA genomes. If these two RNA molecules derive from different viral strains, reverse transcription will give rise to highly recombinated proviral DNAs.</text>
</comment>
<protein>
    <recommendedName>
        <fullName>Gag-Pol polyprotein</fullName>
    </recommendedName>
    <alternativeName>
        <fullName>Pr125Pol</fullName>
    </alternativeName>
    <component>
        <recommendedName>
            <fullName>Matrix protein p15</fullName>
            <shortName>MA</shortName>
        </recommendedName>
    </component>
    <component>
        <recommendedName>
            <fullName>RNA-binding phosphoprotein p12</fullName>
        </recommendedName>
        <alternativeName>
            <fullName>pp12</fullName>
        </alternativeName>
    </component>
    <component>
        <recommendedName>
            <fullName>Capsid protein p30</fullName>
            <shortName>CA</shortName>
        </recommendedName>
    </component>
    <component>
        <recommendedName>
            <fullName>Nucleocapsid protein p10-Pol</fullName>
            <shortName>NC-pol</shortName>
        </recommendedName>
    </component>
    <component>
        <recommendedName>
            <fullName>Protease/Reverse transcriptase/ribonuclease H</fullName>
            <ecNumber>2.7.7.49</ecNumber>
            <ecNumber>2.7.7.7</ecNumber>
            <ecNumber>3.1.26.4</ecNumber>
            <ecNumber evidence="14">3.4.23.-</ecNumber>
        </recommendedName>
        <alternativeName>
            <fullName>p87</fullName>
        </alternativeName>
    </component>
    <component>
        <recommendedName>
            <fullName>Integrase</fullName>
            <shortName>IN</shortName>
            <ecNumber evidence="4">2.7.7.-</ecNumber>
            <ecNumber evidence="4">3.1.-.-</ecNumber>
        </recommendedName>
        <alternativeName>
            <fullName>p42</fullName>
        </alternativeName>
    </component>
</protein>
<gene>
    <name type="primary">pro-pol</name>
</gene>
<organism>
    <name type="scientific">Koala retrovirus</name>
    <name type="common">KoRV</name>
    <dbReference type="NCBI Taxonomy" id="394239"/>
    <lineage>
        <taxon>Viruses</taxon>
        <taxon>Riboviria</taxon>
        <taxon>Pararnavirae</taxon>
        <taxon>Artverviricota</taxon>
        <taxon>Revtraviricetes</taxon>
        <taxon>Ortervirales</taxon>
        <taxon>Retroviridae</taxon>
        <taxon>Orthoretrovirinae</taxon>
        <taxon>Gammaretrovirus</taxon>
    </lineage>
</organism>
<dbReference type="EC" id="2.7.7.49"/>
<dbReference type="EC" id="2.7.7.7"/>
<dbReference type="EC" id="3.1.26.4"/>
<dbReference type="EC" id="3.4.23.-" evidence="14"/>
<dbReference type="EC" id="2.7.7.-" evidence="4"/>
<dbReference type="EC" id="3.1.-.-" evidence="4"/>
<dbReference type="EMBL" id="AF151794">
    <property type="protein sequence ID" value="AAF15098.1"/>
    <property type="molecule type" value="Genomic_DNA"/>
</dbReference>
<dbReference type="EMBL" id="AB721500">
    <property type="protein sequence ID" value="BAM67146.1"/>
    <property type="molecule type" value="Genomic_DNA"/>
</dbReference>
<dbReference type="SMR" id="Q9TTC1"/>
<dbReference type="MEROPS" id="A02.020"/>
<dbReference type="Proteomes" id="UP000007765">
    <property type="component" value="Segment"/>
</dbReference>
<dbReference type="Proteomes" id="UP000101411">
    <property type="component" value="Genome"/>
</dbReference>
<dbReference type="GO" id="GO:0044185">
    <property type="term" value="C:host cell late endosome membrane"/>
    <property type="evidence" value="ECO:0007669"/>
    <property type="project" value="UniProtKB-SubCell"/>
</dbReference>
<dbReference type="GO" id="GO:0020002">
    <property type="term" value="C:host cell plasma membrane"/>
    <property type="evidence" value="ECO:0007669"/>
    <property type="project" value="UniProtKB-SubCell"/>
</dbReference>
<dbReference type="GO" id="GO:0072494">
    <property type="term" value="C:host multivesicular body"/>
    <property type="evidence" value="ECO:0007669"/>
    <property type="project" value="UniProtKB-SubCell"/>
</dbReference>
<dbReference type="GO" id="GO:0016020">
    <property type="term" value="C:membrane"/>
    <property type="evidence" value="ECO:0007669"/>
    <property type="project" value="UniProtKB-KW"/>
</dbReference>
<dbReference type="GO" id="GO:0019013">
    <property type="term" value="C:viral nucleocapsid"/>
    <property type="evidence" value="ECO:0007669"/>
    <property type="project" value="UniProtKB-KW"/>
</dbReference>
<dbReference type="GO" id="GO:0004190">
    <property type="term" value="F:aspartic-type endopeptidase activity"/>
    <property type="evidence" value="ECO:0007669"/>
    <property type="project" value="UniProtKB-KW"/>
</dbReference>
<dbReference type="GO" id="GO:0003677">
    <property type="term" value="F:DNA binding"/>
    <property type="evidence" value="ECO:0007669"/>
    <property type="project" value="UniProtKB-KW"/>
</dbReference>
<dbReference type="GO" id="GO:0003887">
    <property type="term" value="F:DNA-directed DNA polymerase activity"/>
    <property type="evidence" value="ECO:0007669"/>
    <property type="project" value="UniProtKB-KW"/>
</dbReference>
<dbReference type="GO" id="GO:0003723">
    <property type="term" value="F:RNA binding"/>
    <property type="evidence" value="ECO:0007669"/>
    <property type="project" value="UniProtKB-KW"/>
</dbReference>
<dbReference type="GO" id="GO:0003964">
    <property type="term" value="F:RNA-directed DNA polymerase activity"/>
    <property type="evidence" value="ECO:0007669"/>
    <property type="project" value="UniProtKB-KW"/>
</dbReference>
<dbReference type="GO" id="GO:0004523">
    <property type="term" value="F:RNA-DNA hybrid ribonuclease activity"/>
    <property type="evidence" value="ECO:0007669"/>
    <property type="project" value="UniProtKB-EC"/>
</dbReference>
<dbReference type="GO" id="GO:0039660">
    <property type="term" value="F:structural constituent of virion"/>
    <property type="evidence" value="ECO:0007669"/>
    <property type="project" value="UniProtKB-KW"/>
</dbReference>
<dbReference type="GO" id="GO:0008270">
    <property type="term" value="F:zinc ion binding"/>
    <property type="evidence" value="ECO:0007669"/>
    <property type="project" value="UniProtKB-KW"/>
</dbReference>
<dbReference type="GO" id="GO:0015074">
    <property type="term" value="P:DNA integration"/>
    <property type="evidence" value="ECO:0007669"/>
    <property type="project" value="UniProtKB-KW"/>
</dbReference>
<dbReference type="GO" id="GO:0006310">
    <property type="term" value="P:DNA recombination"/>
    <property type="evidence" value="ECO:0007669"/>
    <property type="project" value="UniProtKB-KW"/>
</dbReference>
<dbReference type="GO" id="GO:0075713">
    <property type="term" value="P:establishment of integrated proviral latency"/>
    <property type="evidence" value="ECO:0007669"/>
    <property type="project" value="UniProtKB-KW"/>
</dbReference>
<dbReference type="GO" id="GO:0006508">
    <property type="term" value="P:proteolysis"/>
    <property type="evidence" value="ECO:0007669"/>
    <property type="project" value="UniProtKB-KW"/>
</dbReference>
<dbReference type="GO" id="GO:0046718">
    <property type="term" value="P:symbiont entry into host cell"/>
    <property type="evidence" value="ECO:0007669"/>
    <property type="project" value="UniProtKB-KW"/>
</dbReference>
<dbReference type="GO" id="GO:0044826">
    <property type="term" value="P:viral genome integration into host DNA"/>
    <property type="evidence" value="ECO:0007669"/>
    <property type="project" value="UniProtKB-KW"/>
</dbReference>
<dbReference type="GO" id="GO:0019068">
    <property type="term" value="P:virion assembly"/>
    <property type="evidence" value="ECO:0007669"/>
    <property type="project" value="InterPro"/>
</dbReference>
<dbReference type="CDD" id="cd09273">
    <property type="entry name" value="RNase_HI_RT_Bel"/>
    <property type="match status" value="1"/>
</dbReference>
<dbReference type="CDD" id="cd06095">
    <property type="entry name" value="RP_RTVL_H_like"/>
    <property type="match status" value="1"/>
</dbReference>
<dbReference type="CDD" id="cd03715">
    <property type="entry name" value="RT_ZFREV_like"/>
    <property type="match status" value="1"/>
</dbReference>
<dbReference type="FunFam" id="3.30.70.270:FF:000020">
    <property type="entry name" value="Transposon Tf2-6 polyprotein-like Protein"/>
    <property type="match status" value="1"/>
</dbReference>
<dbReference type="Gene3D" id="1.10.340.70">
    <property type="match status" value="1"/>
</dbReference>
<dbReference type="Gene3D" id="2.30.30.850">
    <property type="match status" value="1"/>
</dbReference>
<dbReference type="Gene3D" id="3.10.20.370">
    <property type="match status" value="1"/>
</dbReference>
<dbReference type="Gene3D" id="3.30.70.270">
    <property type="match status" value="2"/>
</dbReference>
<dbReference type="Gene3D" id="2.40.70.10">
    <property type="entry name" value="Acid Proteases"/>
    <property type="match status" value="1"/>
</dbReference>
<dbReference type="Gene3D" id="1.10.150.180">
    <property type="entry name" value="Gamma-retroviral matrix domain"/>
    <property type="match status" value="1"/>
</dbReference>
<dbReference type="Gene3D" id="3.10.10.10">
    <property type="entry name" value="HIV Type 1 Reverse Transcriptase, subunit A, domain 1"/>
    <property type="match status" value="1"/>
</dbReference>
<dbReference type="Gene3D" id="1.10.375.10">
    <property type="entry name" value="Human Immunodeficiency Virus Type 1 Capsid Protein"/>
    <property type="match status" value="1"/>
</dbReference>
<dbReference type="Gene3D" id="3.30.420.10">
    <property type="entry name" value="Ribonuclease H-like superfamily/Ribonuclease H"/>
    <property type="match status" value="2"/>
</dbReference>
<dbReference type="Gene3D" id="4.10.60.10">
    <property type="entry name" value="Zinc finger, CCHC-type"/>
    <property type="match status" value="1"/>
</dbReference>
<dbReference type="InterPro" id="IPR001969">
    <property type="entry name" value="Aspartic_peptidase_AS"/>
</dbReference>
<dbReference type="InterPro" id="IPR043502">
    <property type="entry name" value="DNA/RNA_pol_sf"/>
</dbReference>
<dbReference type="InterPro" id="IPR000840">
    <property type="entry name" value="G_retro_matrix"/>
</dbReference>
<dbReference type="InterPro" id="IPR036946">
    <property type="entry name" value="G_retro_matrix_sf"/>
</dbReference>
<dbReference type="InterPro" id="IPR003036">
    <property type="entry name" value="Gag_P30"/>
</dbReference>
<dbReference type="InterPro" id="IPR001584">
    <property type="entry name" value="Integrase_cat-core"/>
</dbReference>
<dbReference type="InterPro" id="IPR040643">
    <property type="entry name" value="MLVIN_C"/>
</dbReference>
<dbReference type="InterPro" id="IPR001995">
    <property type="entry name" value="Peptidase_A2_cat"/>
</dbReference>
<dbReference type="InterPro" id="IPR021109">
    <property type="entry name" value="Peptidase_aspartic_dom_sf"/>
</dbReference>
<dbReference type="InterPro" id="IPR018061">
    <property type="entry name" value="Retropepsins"/>
</dbReference>
<dbReference type="InterPro" id="IPR008919">
    <property type="entry name" value="Retrov_capsid_N"/>
</dbReference>
<dbReference type="InterPro" id="IPR050462">
    <property type="entry name" value="Retroviral_Gag-Pol_poly"/>
</dbReference>
<dbReference type="InterPro" id="IPR010999">
    <property type="entry name" value="Retrovr_matrix"/>
</dbReference>
<dbReference type="InterPro" id="IPR043128">
    <property type="entry name" value="Rev_trsase/Diguanyl_cyclase"/>
</dbReference>
<dbReference type="InterPro" id="IPR012337">
    <property type="entry name" value="RNaseH-like_sf"/>
</dbReference>
<dbReference type="InterPro" id="IPR002156">
    <property type="entry name" value="RNaseH_domain"/>
</dbReference>
<dbReference type="InterPro" id="IPR036397">
    <property type="entry name" value="RNaseH_sf"/>
</dbReference>
<dbReference type="InterPro" id="IPR000477">
    <property type="entry name" value="RT_dom"/>
</dbReference>
<dbReference type="InterPro" id="IPR041577">
    <property type="entry name" value="RT_RNaseH_2"/>
</dbReference>
<dbReference type="InterPro" id="IPR001878">
    <property type="entry name" value="Znf_CCHC"/>
</dbReference>
<dbReference type="InterPro" id="IPR036875">
    <property type="entry name" value="Znf_CCHC_sf"/>
</dbReference>
<dbReference type="InterPro" id="IPR015416">
    <property type="entry name" value="Znf_H2C2_histone_UAS-bd"/>
</dbReference>
<dbReference type="PANTHER" id="PTHR33166">
    <property type="entry name" value="GAG_P30 DOMAIN-CONTAINING PROTEIN"/>
    <property type="match status" value="1"/>
</dbReference>
<dbReference type="Pfam" id="PF01140">
    <property type="entry name" value="Gag_MA"/>
    <property type="match status" value="1"/>
</dbReference>
<dbReference type="Pfam" id="PF02093">
    <property type="entry name" value="Gag_p30"/>
    <property type="match status" value="1"/>
</dbReference>
<dbReference type="Pfam" id="PF18697">
    <property type="entry name" value="MLVIN_C"/>
    <property type="match status" value="1"/>
</dbReference>
<dbReference type="Pfam" id="PF00075">
    <property type="entry name" value="RNase_H"/>
    <property type="match status" value="1"/>
</dbReference>
<dbReference type="Pfam" id="PF17919">
    <property type="entry name" value="RT_RNaseH_2"/>
    <property type="match status" value="1"/>
</dbReference>
<dbReference type="Pfam" id="PF00665">
    <property type="entry name" value="rve"/>
    <property type="match status" value="1"/>
</dbReference>
<dbReference type="Pfam" id="PF00077">
    <property type="entry name" value="RVP"/>
    <property type="match status" value="1"/>
</dbReference>
<dbReference type="Pfam" id="PF00078">
    <property type="entry name" value="RVT_1"/>
    <property type="match status" value="1"/>
</dbReference>
<dbReference type="Pfam" id="PF00098">
    <property type="entry name" value="zf-CCHC"/>
    <property type="match status" value="1"/>
</dbReference>
<dbReference type="Pfam" id="PF09337">
    <property type="entry name" value="zf-H2C2"/>
    <property type="match status" value="1"/>
</dbReference>
<dbReference type="SMART" id="SM00343">
    <property type="entry name" value="ZnF_C2HC"/>
    <property type="match status" value="1"/>
</dbReference>
<dbReference type="SUPFAM" id="SSF50630">
    <property type="entry name" value="Acid proteases"/>
    <property type="match status" value="1"/>
</dbReference>
<dbReference type="SUPFAM" id="SSF56672">
    <property type="entry name" value="DNA/RNA polymerases"/>
    <property type="match status" value="1"/>
</dbReference>
<dbReference type="SUPFAM" id="SSF47836">
    <property type="entry name" value="Retroviral matrix proteins"/>
    <property type="match status" value="1"/>
</dbReference>
<dbReference type="SUPFAM" id="SSF47943">
    <property type="entry name" value="Retrovirus capsid protein, N-terminal core domain"/>
    <property type="match status" value="1"/>
</dbReference>
<dbReference type="SUPFAM" id="SSF57756">
    <property type="entry name" value="Retrovirus zinc finger-like domains"/>
    <property type="match status" value="1"/>
</dbReference>
<dbReference type="SUPFAM" id="SSF53098">
    <property type="entry name" value="Ribonuclease H-like"/>
    <property type="match status" value="2"/>
</dbReference>
<dbReference type="PROSITE" id="PS50175">
    <property type="entry name" value="ASP_PROT_RETROV"/>
    <property type="match status" value="1"/>
</dbReference>
<dbReference type="PROSITE" id="PS00141">
    <property type="entry name" value="ASP_PROTEASE"/>
    <property type="match status" value="1"/>
</dbReference>
<dbReference type="PROSITE" id="PS50994">
    <property type="entry name" value="INTEGRASE"/>
    <property type="match status" value="1"/>
</dbReference>
<dbReference type="PROSITE" id="PS50879">
    <property type="entry name" value="RNASE_H_1"/>
    <property type="match status" value="1"/>
</dbReference>
<dbReference type="PROSITE" id="PS50878">
    <property type="entry name" value="RT_POL"/>
    <property type="match status" value="1"/>
</dbReference>
<dbReference type="PROSITE" id="PS50158">
    <property type="entry name" value="ZF_CCHC"/>
    <property type="match status" value="1"/>
</dbReference>
<name>POL_KORV</name>
<keyword id="KW-0064">Aspartyl protease</keyword>
<keyword id="KW-0167">Capsid protein</keyword>
<keyword id="KW-0175">Coiled coil</keyword>
<keyword id="KW-0229">DNA integration</keyword>
<keyword id="KW-0233">DNA recombination</keyword>
<keyword id="KW-0238">DNA-binding</keyword>
<keyword id="KW-0239">DNA-directed DNA polymerase</keyword>
<keyword id="KW-0255">Endonuclease</keyword>
<keyword id="KW-1032">Host cell membrane</keyword>
<keyword id="KW-1035">Host cytoplasm</keyword>
<keyword id="KW-1039">Host endosome</keyword>
<keyword id="KW-1043">Host membrane</keyword>
<keyword id="KW-0945">Host-virus interaction</keyword>
<keyword id="KW-0378">Hydrolase</keyword>
<keyword id="KW-0449">Lipoprotein</keyword>
<keyword id="KW-0460">Magnesium</keyword>
<keyword id="KW-0472">Membrane</keyword>
<keyword id="KW-0479">Metal-binding</keyword>
<keyword id="KW-0511">Multifunctional enzyme</keyword>
<keyword id="KW-0519">Myristate</keyword>
<keyword id="KW-0540">Nuclease</keyword>
<keyword id="KW-0548">Nucleotidyltransferase</keyword>
<keyword id="KW-0597">Phosphoprotein</keyword>
<keyword id="KW-0645">Protease</keyword>
<keyword id="KW-1159">RNA suppression of termination</keyword>
<keyword id="KW-0694">RNA-binding</keyword>
<keyword id="KW-0695">RNA-directed DNA polymerase</keyword>
<keyword id="KW-0808">Transferase</keyword>
<keyword id="KW-1179">Viral genome integration</keyword>
<keyword id="KW-0468">Viral matrix protein</keyword>
<keyword id="KW-0543">Viral nucleoprotein</keyword>
<keyword id="KW-0946">Virion</keyword>
<keyword id="KW-1160">Virus entry into host cell</keyword>
<keyword id="KW-0862">Zinc</keyword>
<keyword id="KW-0863">Zinc-finger</keyword>